<reference key="1">
    <citation type="journal article" date="2008" name="J. Bacteriol.">
        <title>Insights into the environmental resistance gene pool from the genome sequence of the multidrug-resistant environmental isolate Escherichia coli SMS-3-5.</title>
        <authorList>
            <person name="Fricke W.F."/>
            <person name="Wright M.S."/>
            <person name="Lindell A.H."/>
            <person name="Harkins D.M."/>
            <person name="Baker-Austin C."/>
            <person name="Ravel J."/>
            <person name="Stepanauskas R."/>
        </authorList>
    </citation>
    <scope>NUCLEOTIDE SEQUENCE [LARGE SCALE GENOMIC DNA]</scope>
    <source>
        <strain>SMS-3-5 / SECEC</strain>
    </source>
</reference>
<gene>
    <name evidence="1" type="primary">rlmM</name>
    <name type="ordered locus">EcSMS35_2947</name>
</gene>
<name>RLMM_ECOSM</name>
<feature type="chain" id="PRO_1000201514" description="Ribosomal RNA large subunit methyltransferase M">
    <location>
        <begin position="1"/>
        <end position="366"/>
    </location>
</feature>
<feature type="active site" description="Proton acceptor" evidence="1">
    <location>
        <position position="306"/>
    </location>
</feature>
<feature type="binding site" evidence="1">
    <location>
        <position position="188"/>
    </location>
    <ligand>
        <name>S-adenosyl-L-methionine</name>
        <dbReference type="ChEBI" id="CHEBI:59789"/>
    </ligand>
</feature>
<feature type="binding site" evidence="1">
    <location>
        <begin position="221"/>
        <end position="224"/>
    </location>
    <ligand>
        <name>S-adenosyl-L-methionine</name>
        <dbReference type="ChEBI" id="CHEBI:59789"/>
    </ligand>
</feature>
<feature type="binding site" evidence="1">
    <location>
        <position position="240"/>
    </location>
    <ligand>
        <name>S-adenosyl-L-methionine</name>
        <dbReference type="ChEBI" id="CHEBI:59789"/>
    </ligand>
</feature>
<feature type="binding site" evidence="1">
    <location>
        <position position="260"/>
    </location>
    <ligand>
        <name>S-adenosyl-L-methionine</name>
        <dbReference type="ChEBI" id="CHEBI:59789"/>
    </ligand>
</feature>
<feature type="binding site" evidence="1">
    <location>
        <position position="277"/>
    </location>
    <ligand>
        <name>S-adenosyl-L-methionine</name>
        <dbReference type="ChEBI" id="CHEBI:59789"/>
    </ligand>
</feature>
<proteinExistence type="inferred from homology"/>
<accession>B1LR00</accession>
<organism>
    <name type="scientific">Escherichia coli (strain SMS-3-5 / SECEC)</name>
    <dbReference type="NCBI Taxonomy" id="439855"/>
    <lineage>
        <taxon>Bacteria</taxon>
        <taxon>Pseudomonadati</taxon>
        <taxon>Pseudomonadota</taxon>
        <taxon>Gammaproteobacteria</taxon>
        <taxon>Enterobacterales</taxon>
        <taxon>Enterobacteriaceae</taxon>
        <taxon>Escherichia</taxon>
    </lineage>
</organism>
<protein>
    <recommendedName>
        <fullName evidence="1">Ribosomal RNA large subunit methyltransferase M</fullName>
        <ecNumber evidence="1">2.1.1.186</ecNumber>
    </recommendedName>
    <alternativeName>
        <fullName evidence="1">23S rRNA (cytidine2498-2'-O)-methyltransferase</fullName>
    </alternativeName>
    <alternativeName>
        <fullName evidence="1">23S rRNA 2'-O-ribose methyltransferase RlmM</fullName>
    </alternativeName>
</protein>
<keyword id="KW-0963">Cytoplasm</keyword>
<keyword id="KW-0489">Methyltransferase</keyword>
<keyword id="KW-0698">rRNA processing</keyword>
<keyword id="KW-0949">S-adenosyl-L-methionine</keyword>
<keyword id="KW-0808">Transferase</keyword>
<sequence length="366" mass="41905">MNKVVLLCRPGFEKECAAEITDKAGQREIFGFARVKENAGYVIYECYQPDDGDKLIRELPFSSLIFARQWFVVGELLQHLPPEDRITPIVGMLQGVVEKGGELRVEVADTNESKELLKFCRKFTVPLRAALRDAGVLANYETPKRPVVHVFFIAPGCCYTGYSYSNNNSPFYMGIPRLKFPADAPSRSTLKLEEAFHVFIPADEWDERLANGMWAVDLGACPGGWTYQLVKRNMWVYSVDNGPMAQSLMDTGQVTWLREDGFKFRPTRSNISWMVCDMVEKPAKVAALMAQWLVNGWCRETIFNLKLPMKKRYEEVSHNLAYIQAQLDEHGINAQIQARQLYHDREEVTVHVRRIWAAVGGRRDER</sequence>
<evidence type="ECO:0000255" key="1">
    <source>
        <dbReference type="HAMAP-Rule" id="MF_01551"/>
    </source>
</evidence>
<dbReference type="EC" id="2.1.1.186" evidence="1"/>
<dbReference type="EMBL" id="CP000970">
    <property type="protein sequence ID" value="ACB16704.1"/>
    <property type="molecule type" value="Genomic_DNA"/>
</dbReference>
<dbReference type="RefSeq" id="WP_001045520.1">
    <property type="nucleotide sequence ID" value="NC_010498.1"/>
</dbReference>
<dbReference type="SMR" id="B1LR00"/>
<dbReference type="GeneID" id="75203803"/>
<dbReference type="KEGG" id="ecm:EcSMS35_2947"/>
<dbReference type="HOGENOM" id="CLU_043780_0_0_6"/>
<dbReference type="Proteomes" id="UP000007011">
    <property type="component" value="Chromosome"/>
</dbReference>
<dbReference type="GO" id="GO:0005737">
    <property type="term" value="C:cytoplasm"/>
    <property type="evidence" value="ECO:0007669"/>
    <property type="project" value="UniProtKB-SubCell"/>
</dbReference>
<dbReference type="GO" id="GO:0008757">
    <property type="term" value="F:S-adenosylmethionine-dependent methyltransferase activity"/>
    <property type="evidence" value="ECO:0007669"/>
    <property type="project" value="UniProtKB-UniRule"/>
</dbReference>
<dbReference type="GO" id="GO:0032259">
    <property type="term" value="P:methylation"/>
    <property type="evidence" value="ECO:0007669"/>
    <property type="project" value="UniProtKB-KW"/>
</dbReference>
<dbReference type="GO" id="GO:0006364">
    <property type="term" value="P:rRNA processing"/>
    <property type="evidence" value="ECO:0007669"/>
    <property type="project" value="UniProtKB-UniRule"/>
</dbReference>
<dbReference type="FunFam" id="3.30.2300.20:FF:000001">
    <property type="entry name" value="Ribosomal RNA large subunit methyltransferase M"/>
    <property type="match status" value="1"/>
</dbReference>
<dbReference type="FunFam" id="3.30.70.2810:FF:000001">
    <property type="entry name" value="Ribosomal RNA large subunit methyltransferase M"/>
    <property type="match status" value="1"/>
</dbReference>
<dbReference type="FunFam" id="3.40.50.150:FF:000020">
    <property type="entry name" value="Ribosomal RNA large subunit methyltransferase M"/>
    <property type="match status" value="1"/>
</dbReference>
<dbReference type="Gene3D" id="3.30.2300.20">
    <property type="match status" value="1"/>
</dbReference>
<dbReference type="Gene3D" id="3.30.70.2810">
    <property type="match status" value="1"/>
</dbReference>
<dbReference type="Gene3D" id="3.40.50.150">
    <property type="entry name" value="Vaccinia Virus protein VP39"/>
    <property type="match status" value="1"/>
</dbReference>
<dbReference type="HAMAP" id="MF_01551">
    <property type="entry name" value="23SrRNA_methyltr_M"/>
    <property type="match status" value="1"/>
</dbReference>
<dbReference type="InterPro" id="IPR040739">
    <property type="entry name" value="RlmM_FDX"/>
</dbReference>
<dbReference type="InterPro" id="IPR048646">
    <property type="entry name" value="RlmM_THUMP-like"/>
</dbReference>
<dbReference type="InterPro" id="IPR002877">
    <property type="entry name" value="RNA_MeTrfase_FtsJ_dom"/>
</dbReference>
<dbReference type="InterPro" id="IPR011224">
    <property type="entry name" value="rRNA_MeTrfase_M"/>
</dbReference>
<dbReference type="InterPro" id="IPR029063">
    <property type="entry name" value="SAM-dependent_MTases_sf"/>
</dbReference>
<dbReference type="NCBIfam" id="NF008734">
    <property type="entry name" value="PRK11760.1"/>
    <property type="match status" value="1"/>
</dbReference>
<dbReference type="PANTHER" id="PTHR37524">
    <property type="entry name" value="RIBOSOMAL RNA LARGE SUBUNIT METHYLTRANSFERASE M"/>
    <property type="match status" value="1"/>
</dbReference>
<dbReference type="PANTHER" id="PTHR37524:SF2">
    <property type="entry name" value="RIBOSOMAL RNA METHYLTRANSFERASE FTSJ DOMAIN-CONTAINING PROTEIN"/>
    <property type="match status" value="1"/>
</dbReference>
<dbReference type="Pfam" id="PF01728">
    <property type="entry name" value="FtsJ"/>
    <property type="match status" value="1"/>
</dbReference>
<dbReference type="Pfam" id="PF18125">
    <property type="entry name" value="RlmM_FDX"/>
    <property type="match status" value="1"/>
</dbReference>
<dbReference type="Pfam" id="PF21239">
    <property type="entry name" value="RLMM_N"/>
    <property type="match status" value="1"/>
</dbReference>
<dbReference type="PIRSF" id="PIRSF028774">
    <property type="entry name" value="UCP028774"/>
    <property type="match status" value="1"/>
</dbReference>
<dbReference type="SUPFAM" id="SSF53335">
    <property type="entry name" value="S-adenosyl-L-methionine-dependent methyltransferases"/>
    <property type="match status" value="1"/>
</dbReference>
<comment type="function">
    <text evidence="1">Catalyzes the 2'-O-methylation at nucleotide C2498 in 23S rRNA.</text>
</comment>
<comment type="catalytic activity">
    <reaction evidence="1">
        <text>cytidine(2498) in 23S rRNA + S-adenosyl-L-methionine = 2'-O-methylcytidine(2498) in 23S rRNA + S-adenosyl-L-homocysteine + H(+)</text>
        <dbReference type="Rhea" id="RHEA:42788"/>
        <dbReference type="Rhea" id="RHEA-COMP:10244"/>
        <dbReference type="Rhea" id="RHEA-COMP:10245"/>
        <dbReference type="ChEBI" id="CHEBI:15378"/>
        <dbReference type="ChEBI" id="CHEBI:57856"/>
        <dbReference type="ChEBI" id="CHEBI:59789"/>
        <dbReference type="ChEBI" id="CHEBI:74495"/>
        <dbReference type="ChEBI" id="CHEBI:82748"/>
        <dbReference type="EC" id="2.1.1.186"/>
    </reaction>
</comment>
<comment type="subunit">
    <text evidence="1">Monomer.</text>
</comment>
<comment type="subcellular location">
    <subcellularLocation>
        <location evidence="1">Cytoplasm</location>
    </subcellularLocation>
</comment>
<comment type="similarity">
    <text evidence="1">Belongs to the class I-like SAM-binding methyltransferase superfamily. RNA methyltransferase RlmE family. RlmM subfamily.</text>
</comment>